<gene>
    <name evidence="1" type="primary">ureB</name>
    <name type="synonym">hpuB</name>
    <name type="ordered locus">HP_0072</name>
</gene>
<name>URE1_HELPY</name>
<protein>
    <recommendedName>
        <fullName evidence="1">Urease subunit beta</fullName>
        <ecNumber evidence="1">3.5.1.5</ecNumber>
    </recommendedName>
    <alternativeName>
        <fullName evidence="1">Urea amidohydrolase subunit beta</fullName>
    </alternativeName>
</protein>
<proteinExistence type="evidence at protein level"/>
<sequence length="569" mass="61684">MKKISRKEYVSMYGPTTGDKVRLGDTDLIAEVEHDYTIYGEELKFGGGKTLREGMSQSNNPSKEELDLIITNALIVDYTGIYKADIGIKDGKIAGIGKGGNKDMQDGVKNNLSVGPATEALAGEGLIVTAGGIDTHIHFISPQQIPTAFASGVTTMIGGGTGPADGTNATTITPGRRNLKWMLRAAEEYSMNLGFLAKGNASNDASLADQIEAGAIGFKIHEDWGTTPSAINHALDVADKYDVQVAIHTDTLNEAGCVEDTMAAIAGRTMHTFHTEGAGGGHAPDIIKVAGEHNILPASTNPTIPFTVNTEAEHMDMLMVCHHLDKSIKEDVQFADSRIRPQTIAAEDTLHDMGIFSITSSDSQAMGRVGEVITRTWQTADKNKKEFGRLKEEKGDNDNFRIKRYLSKYTINPAIAHGISEYVGSVEVGKVADLVLWSPAFFGVKPNMIIKGGFIALSQMGDANASIPTPQPVYYREMFAHHGKAKYDANITFVSQAAYDKGIKEELGLERQVLPVKNCRNITKKDMQFNDTTAHIEVNPETYHVFVDGKEVTSKPANKVSLAQLFSIF</sequence>
<keyword id="KW-0002">3D-structure</keyword>
<keyword id="KW-0963">Cytoplasm</keyword>
<keyword id="KW-0903">Direct protein sequencing</keyword>
<keyword id="KW-0378">Hydrolase</keyword>
<keyword id="KW-0479">Metal-binding</keyword>
<keyword id="KW-0533">Nickel</keyword>
<keyword id="KW-1185">Reference proteome</keyword>
<keyword id="KW-0843">Virulence</keyword>
<evidence type="ECO:0000255" key="1">
    <source>
        <dbReference type="HAMAP-Rule" id="MF_01953"/>
    </source>
</evidence>
<evidence type="ECO:0000269" key="2">
    <source>
    </source>
</evidence>
<evidence type="ECO:0000269" key="3">
    <source>
    </source>
</evidence>
<evidence type="ECO:0000269" key="4">
    <source>
    </source>
</evidence>
<evidence type="ECO:0000269" key="5">
    <source>
    </source>
</evidence>
<evidence type="ECO:0000269" key="6">
    <source>
    </source>
</evidence>
<evidence type="ECO:0000269" key="7">
    <source>
    </source>
</evidence>
<evidence type="ECO:0000269" key="8">
    <source>
    </source>
</evidence>
<evidence type="ECO:0000269" key="9">
    <source>
    </source>
</evidence>
<evidence type="ECO:0000269" key="10">
    <source>
    </source>
</evidence>
<evidence type="ECO:0000305" key="11"/>
<evidence type="ECO:0007829" key="12">
    <source>
        <dbReference type="PDB" id="1E9Y"/>
    </source>
</evidence>
<evidence type="ECO:0007829" key="13">
    <source>
        <dbReference type="PDB" id="1E9Z"/>
    </source>
</evidence>
<evidence type="ECO:0007829" key="14">
    <source>
        <dbReference type="PDB" id="6QSU"/>
    </source>
</evidence>
<evidence type="ECO:0007829" key="15">
    <source>
        <dbReference type="PDB" id="6ZJA"/>
    </source>
</evidence>
<feature type="chain" id="PRO_0000067533" description="Urease subunit beta">
    <location>
        <begin position="1"/>
        <end position="569"/>
    </location>
</feature>
<feature type="domain" description="Urease" evidence="1">
    <location>
        <begin position="131"/>
        <end position="569"/>
    </location>
</feature>
<feature type="active site" description="Proton donor" evidence="11">
    <location>
        <position position="322"/>
    </location>
</feature>
<feature type="binding site">
    <location>
        <position position="136"/>
    </location>
    <ligand>
        <name>Ni(2+)</name>
        <dbReference type="ChEBI" id="CHEBI:49786"/>
        <label>1</label>
    </ligand>
</feature>
<feature type="binding site">
    <location>
        <position position="138"/>
    </location>
    <ligand>
        <name>Ni(2+)</name>
        <dbReference type="ChEBI" id="CHEBI:49786"/>
        <label>1</label>
    </ligand>
</feature>
<feature type="binding site" description="via carbamate group">
    <location>
        <position position="219"/>
    </location>
    <ligand>
        <name>Ni(2+)</name>
        <dbReference type="ChEBI" id="CHEBI:49786"/>
        <label>1</label>
    </ligand>
</feature>
<feature type="binding site" description="via carbamate group">
    <location>
        <position position="219"/>
    </location>
    <ligand>
        <name>Ni(2+)</name>
        <dbReference type="ChEBI" id="CHEBI:49786"/>
        <label>2</label>
    </ligand>
</feature>
<feature type="binding site" evidence="11">
    <location>
        <position position="221"/>
    </location>
    <ligand>
        <name>substrate</name>
    </ligand>
</feature>
<feature type="binding site">
    <location>
        <position position="248"/>
    </location>
    <ligand>
        <name>Ni(2+)</name>
        <dbReference type="ChEBI" id="CHEBI:49786"/>
        <label>2</label>
    </ligand>
</feature>
<feature type="binding site">
    <location>
        <position position="274"/>
    </location>
    <ligand>
        <name>Ni(2+)</name>
        <dbReference type="ChEBI" id="CHEBI:49786"/>
        <label>2</label>
    </ligand>
</feature>
<feature type="binding site">
    <location>
        <position position="362"/>
    </location>
    <ligand>
        <name>Ni(2+)</name>
        <dbReference type="ChEBI" id="CHEBI:49786"/>
        <label>1</label>
    </ligand>
</feature>
<feature type="modified residue" description="N6-carboxylysine" evidence="1 2">
    <location>
        <position position="219"/>
    </location>
</feature>
<feature type="sequence conflict" description="In Ref. 2; CAA34933." evidence="11" ref="2">
    <original>V</original>
    <variation>A</variation>
    <location>
        <position position="10"/>
    </location>
</feature>
<feature type="sequence conflict" description="In Ref. 2." evidence="11" ref="2">
    <original>D</original>
    <variation>A</variation>
    <location>
        <position position="19"/>
    </location>
</feature>
<feature type="sequence conflict" description="In Ref. 4; AA sequence." evidence="11" ref="4">
    <original>R</original>
    <variation>C</variation>
    <location>
        <position position="22"/>
    </location>
</feature>
<feature type="sequence conflict" description="In Ref. 4; AA sequence." evidence="11" ref="4">
    <original>D</original>
    <variation>C</variation>
    <location>
        <position position="27"/>
    </location>
</feature>
<feature type="sequence conflict" description="In Ref. 2; CAA34933." evidence="11" ref="2">
    <original>M</original>
    <variation>T</variation>
    <location>
        <position position="104"/>
    </location>
</feature>
<feature type="sequence conflict" description="In Ref. 2; CAA34933." evidence="11" ref="2">
    <original>W</original>
    <variation>F</variation>
    <location>
        <position position="181"/>
    </location>
</feature>
<feature type="sequence conflict" description="In Ref. 2; CAA34933." evidence="11" ref="2">
    <original>L</original>
    <variation>F</variation>
    <location>
        <position position="193"/>
    </location>
</feature>
<feature type="sequence conflict" description="In Ref. 2; CAA34933." evidence="11" ref="2">
    <original>F</original>
    <variation>L</variation>
    <location>
        <position position="218"/>
    </location>
</feature>
<feature type="sequence conflict" description="In Ref. 2; CAA34933." evidence="11" ref="2">
    <original>F</original>
    <variation>Y</variation>
    <location>
        <position position="273"/>
    </location>
</feature>
<feature type="sequence conflict" description="In Ref. 2; CAA34933." evidence="11" ref="2">
    <original>P</original>
    <variation>S</variation>
    <location>
        <position position="540"/>
    </location>
</feature>
<feature type="sequence conflict" description="In Ref. 2; CAA34933." evidence="11" ref="2">
    <original>SKPANKVSLAQLFSIF</original>
    <variation>LNQPIK</variation>
    <location>
        <begin position="554"/>
        <end position="569"/>
    </location>
</feature>
<feature type="strand" evidence="15">
    <location>
        <begin position="2"/>
        <end position="4"/>
    </location>
</feature>
<feature type="helix" evidence="15">
    <location>
        <begin position="6"/>
        <end position="13"/>
    </location>
</feature>
<feature type="strand" evidence="15">
    <location>
        <begin position="20"/>
        <end position="22"/>
    </location>
</feature>
<feature type="strand" evidence="15">
    <location>
        <begin position="29"/>
        <end position="31"/>
    </location>
</feature>
<feature type="strand" evidence="15">
    <location>
        <begin position="49"/>
        <end position="53"/>
    </location>
</feature>
<feature type="turn" evidence="15">
    <location>
        <begin position="54"/>
        <end position="56"/>
    </location>
</feature>
<feature type="strand" evidence="15">
    <location>
        <begin position="67"/>
        <end position="77"/>
    </location>
</feature>
<feature type="strand" evidence="15">
    <location>
        <begin position="80"/>
        <end position="89"/>
    </location>
</feature>
<feature type="strand" evidence="15">
    <location>
        <begin position="92"/>
        <end position="97"/>
    </location>
</feature>
<feature type="turn" evidence="15">
    <location>
        <begin position="102"/>
        <end position="104"/>
    </location>
</feature>
<feature type="strand" evidence="12">
    <location>
        <begin position="105"/>
        <end position="107"/>
    </location>
</feature>
<feature type="helix" evidence="15">
    <location>
        <begin position="110"/>
        <end position="112"/>
    </location>
</feature>
<feature type="strand" evidence="15">
    <location>
        <begin position="119"/>
        <end position="122"/>
    </location>
</feature>
<feature type="strand" evidence="15">
    <location>
        <begin position="127"/>
        <end position="130"/>
    </location>
</feature>
<feature type="strand" evidence="15">
    <location>
        <begin position="132"/>
        <end position="138"/>
    </location>
</feature>
<feature type="helix" evidence="15">
    <location>
        <begin position="144"/>
        <end position="151"/>
    </location>
</feature>
<feature type="strand" evidence="15">
    <location>
        <begin position="153"/>
        <end position="159"/>
    </location>
</feature>
<feature type="strand" evidence="15">
    <location>
        <begin position="162"/>
        <end position="164"/>
    </location>
</feature>
<feature type="helix" evidence="15">
    <location>
        <begin position="165"/>
        <end position="169"/>
    </location>
</feature>
<feature type="helix" evidence="15">
    <location>
        <begin position="175"/>
        <end position="185"/>
    </location>
</feature>
<feature type="helix" evidence="15">
    <location>
        <begin position="186"/>
        <end position="188"/>
    </location>
</feature>
<feature type="strand" evidence="15">
    <location>
        <begin position="190"/>
        <end position="195"/>
    </location>
</feature>
<feature type="helix" evidence="15">
    <location>
        <begin position="204"/>
        <end position="212"/>
    </location>
</feature>
<feature type="strand" evidence="15">
    <location>
        <begin position="217"/>
        <end position="220"/>
    </location>
</feature>
<feature type="helix" evidence="15">
    <location>
        <begin position="222"/>
        <end position="224"/>
    </location>
</feature>
<feature type="helix" evidence="15">
    <location>
        <begin position="228"/>
        <end position="241"/>
    </location>
</feature>
<feature type="strand" evidence="15">
    <location>
        <begin position="244"/>
        <end position="247"/>
    </location>
</feature>
<feature type="helix" evidence="15">
    <location>
        <begin position="258"/>
        <end position="265"/>
    </location>
</feature>
<feature type="strand" evidence="15">
    <location>
        <begin position="270"/>
        <end position="274"/>
    </location>
</feature>
<feature type="turn" evidence="15">
    <location>
        <begin position="283"/>
        <end position="285"/>
    </location>
</feature>
<feature type="helix" evidence="15">
    <location>
        <begin position="286"/>
        <end position="291"/>
    </location>
</feature>
<feature type="strand" evidence="15">
    <location>
        <begin position="292"/>
        <end position="300"/>
    </location>
</feature>
<feature type="helix" evidence="15">
    <location>
        <begin position="301"/>
        <end position="303"/>
    </location>
</feature>
<feature type="helix" evidence="15">
    <location>
        <begin position="310"/>
        <end position="321"/>
    </location>
</feature>
<feature type="helix" evidence="15">
    <location>
        <begin position="329"/>
        <end position="338"/>
    </location>
</feature>
<feature type="helix" evidence="15">
    <location>
        <begin position="341"/>
        <end position="352"/>
    </location>
</feature>
<feature type="strand" evidence="15">
    <location>
        <begin position="358"/>
        <end position="360"/>
    </location>
</feature>
<feature type="strand" evidence="15">
    <location>
        <begin position="365"/>
        <end position="367"/>
    </location>
</feature>
<feature type="helix" evidence="15">
    <location>
        <begin position="372"/>
        <end position="387"/>
    </location>
</feature>
<feature type="strand" evidence="15">
    <location>
        <begin position="395"/>
        <end position="397"/>
    </location>
</feature>
<feature type="helix" evidence="15">
    <location>
        <begin position="399"/>
        <end position="407"/>
    </location>
</feature>
<feature type="turn" evidence="15">
    <location>
        <begin position="408"/>
        <end position="410"/>
    </location>
</feature>
<feature type="helix" evidence="15">
    <location>
        <begin position="411"/>
        <end position="416"/>
    </location>
</feature>
<feature type="turn" evidence="15">
    <location>
        <begin position="420"/>
        <end position="422"/>
    </location>
</feature>
<feature type="strand" evidence="15">
    <location>
        <begin position="423"/>
        <end position="425"/>
    </location>
</feature>
<feature type="strand" evidence="15">
    <location>
        <begin position="434"/>
        <end position="437"/>
    </location>
</feature>
<feature type="helix" evidence="15">
    <location>
        <begin position="439"/>
        <end position="441"/>
    </location>
</feature>
<feature type="turn" evidence="15">
    <location>
        <begin position="442"/>
        <end position="444"/>
    </location>
</feature>
<feature type="strand" evidence="15">
    <location>
        <begin position="447"/>
        <end position="451"/>
    </location>
</feature>
<feature type="strand" evidence="15">
    <location>
        <begin position="454"/>
        <end position="460"/>
    </location>
</feature>
<feature type="strand" evidence="15">
    <location>
        <begin position="465"/>
        <end position="468"/>
    </location>
</feature>
<feature type="strand" evidence="13">
    <location>
        <begin position="470"/>
        <end position="472"/>
    </location>
</feature>
<feature type="strand" evidence="15">
    <location>
        <begin position="474"/>
        <end position="477"/>
    </location>
</feature>
<feature type="helix" evidence="15">
    <location>
        <begin position="479"/>
        <end position="481"/>
    </location>
</feature>
<feature type="helix" evidence="15">
    <location>
        <begin position="485"/>
        <end position="488"/>
    </location>
</feature>
<feature type="strand" evidence="15">
    <location>
        <begin position="491"/>
        <end position="494"/>
    </location>
</feature>
<feature type="helix" evidence="15">
    <location>
        <begin position="496"/>
        <end position="500"/>
    </location>
</feature>
<feature type="helix" evidence="15">
    <location>
        <begin position="503"/>
        <end position="507"/>
    </location>
</feature>
<feature type="strand" evidence="15">
    <location>
        <begin position="511"/>
        <end position="515"/>
    </location>
</feature>
<feature type="helix" evidence="15">
    <location>
        <begin position="524"/>
        <end position="526"/>
    </location>
</feature>
<feature type="strand" evidence="14">
    <location>
        <begin position="527"/>
        <end position="529"/>
    </location>
</feature>
<feature type="strand" evidence="15">
    <location>
        <begin position="536"/>
        <end position="538"/>
    </location>
</feature>
<feature type="turn" evidence="15">
    <location>
        <begin position="540"/>
        <end position="542"/>
    </location>
</feature>
<feature type="strand" evidence="15">
    <location>
        <begin position="545"/>
        <end position="547"/>
    </location>
</feature>
<feature type="strand" evidence="15">
    <location>
        <begin position="561"/>
        <end position="563"/>
    </location>
</feature>
<feature type="turn" evidence="15">
    <location>
        <begin position="564"/>
        <end position="566"/>
    </location>
</feature>
<dbReference type="EC" id="3.5.1.5" evidence="1"/>
<dbReference type="EMBL" id="M60398">
    <property type="protein sequence ID" value="AAA25021.1"/>
    <property type="molecule type" value="Genomic_DNA"/>
</dbReference>
<dbReference type="EMBL" id="X17079">
    <property type="protein sequence ID" value="CAA34933.1"/>
    <property type="molecule type" value="Genomic_DNA"/>
</dbReference>
<dbReference type="EMBL" id="AE000511">
    <property type="protein sequence ID" value="AAD07143.1"/>
    <property type="molecule type" value="Genomic_DNA"/>
</dbReference>
<dbReference type="EMBL" id="M84338">
    <property type="status" value="NOT_ANNOTATED_CDS"/>
    <property type="molecule type" value="Genomic_DNA"/>
</dbReference>
<dbReference type="PIR" id="B38537">
    <property type="entry name" value="URKCBP"/>
</dbReference>
<dbReference type="RefSeq" id="NP_206872.1">
    <property type="nucleotide sequence ID" value="NC_000915.1"/>
</dbReference>
<dbReference type="RefSeq" id="WP_000724295.1">
    <property type="nucleotide sequence ID" value="NC_018939.1"/>
</dbReference>
<dbReference type="PDB" id="1E9Y">
    <property type="method" value="X-ray"/>
    <property type="resolution" value="3.00 A"/>
    <property type="chains" value="B=1-569"/>
</dbReference>
<dbReference type="PDB" id="1E9Z">
    <property type="method" value="X-ray"/>
    <property type="resolution" value="3.00 A"/>
    <property type="chains" value="B=1-569"/>
</dbReference>
<dbReference type="PDB" id="6QSU">
    <property type="method" value="EM"/>
    <property type="resolution" value="2.40 A"/>
    <property type="chains" value="B/D/F/H/J/L/N/P/R/T/V/X=1-569"/>
</dbReference>
<dbReference type="PDB" id="6ZJA">
    <property type="method" value="EM"/>
    <property type="resolution" value="2.00 A"/>
    <property type="chains" value="B/D/F/H/J/L/N/P/R/T/V/X=1-569"/>
</dbReference>
<dbReference type="PDB" id="8HC1">
    <property type="method" value="EM"/>
    <property type="resolution" value="2.30 A"/>
    <property type="chains" value="B/F/J/N/R/V/Z/d/h/l/p/t=1-569"/>
</dbReference>
<dbReference type="PDBsum" id="1E9Y"/>
<dbReference type="PDBsum" id="1E9Z"/>
<dbReference type="PDBsum" id="6QSU"/>
<dbReference type="PDBsum" id="6ZJA"/>
<dbReference type="PDBsum" id="8HC1"/>
<dbReference type="EMDB" id="EMD-11233"/>
<dbReference type="EMDB" id="EMD-34648"/>
<dbReference type="EMDB" id="EMD-4629"/>
<dbReference type="SMR" id="P69996"/>
<dbReference type="IntAct" id="P69996">
    <property type="interactions" value="14"/>
</dbReference>
<dbReference type="MINT" id="P69996"/>
<dbReference type="STRING" id="85962.HP_0072"/>
<dbReference type="BindingDB" id="P69996"/>
<dbReference type="ChEMBL" id="CHEMBL3885651"/>
<dbReference type="MEROPS" id="M38.982"/>
<dbReference type="PaxDb" id="85962-C694_00350"/>
<dbReference type="ABCD" id="P69996">
    <property type="antibodies" value="1 sequenced antibody"/>
</dbReference>
<dbReference type="EnsemblBacteria" id="AAD07143">
    <property type="protein sequence ID" value="AAD07143"/>
    <property type="gene ID" value="HP_0072"/>
</dbReference>
<dbReference type="KEGG" id="heo:C694_00350"/>
<dbReference type="KEGG" id="hpy:HP_0072"/>
<dbReference type="PATRIC" id="fig|85962.47.peg.76"/>
<dbReference type="eggNOG" id="COG0804">
    <property type="taxonomic scope" value="Bacteria"/>
</dbReference>
<dbReference type="InParanoid" id="P69996"/>
<dbReference type="OrthoDB" id="9802793at2"/>
<dbReference type="PhylomeDB" id="P69996"/>
<dbReference type="BioCyc" id="MetaCyc:HP_RS00365-MONOMER"/>
<dbReference type="SABIO-RK" id="P69996"/>
<dbReference type="UniPathway" id="UPA00258">
    <property type="reaction ID" value="UER00370"/>
</dbReference>
<dbReference type="EvolutionaryTrace" id="P69996"/>
<dbReference type="PHI-base" id="PHI:3145"/>
<dbReference type="Proteomes" id="UP000000429">
    <property type="component" value="Chromosome"/>
</dbReference>
<dbReference type="GO" id="GO:0005737">
    <property type="term" value="C:cytoplasm"/>
    <property type="evidence" value="ECO:0007669"/>
    <property type="project" value="UniProtKB-SubCell"/>
</dbReference>
<dbReference type="GO" id="GO:0016151">
    <property type="term" value="F:nickel cation binding"/>
    <property type="evidence" value="ECO:0007669"/>
    <property type="project" value="UniProtKB-UniRule"/>
</dbReference>
<dbReference type="GO" id="GO:0009039">
    <property type="term" value="F:urease activity"/>
    <property type="evidence" value="ECO:0007669"/>
    <property type="project" value="UniProtKB-UniRule"/>
</dbReference>
<dbReference type="GO" id="GO:0043419">
    <property type="term" value="P:urea catabolic process"/>
    <property type="evidence" value="ECO:0007669"/>
    <property type="project" value="UniProtKB-UniRule"/>
</dbReference>
<dbReference type="CDD" id="cd00375">
    <property type="entry name" value="Urease_alpha"/>
    <property type="match status" value="1"/>
</dbReference>
<dbReference type="Gene3D" id="3.20.20.140">
    <property type="entry name" value="Metal-dependent hydrolases"/>
    <property type="match status" value="1"/>
</dbReference>
<dbReference type="Gene3D" id="2.30.40.10">
    <property type="entry name" value="Urease, subunit C, domain 1"/>
    <property type="match status" value="1"/>
</dbReference>
<dbReference type="HAMAP" id="MF_01953">
    <property type="entry name" value="Urease_alpha"/>
    <property type="match status" value="1"/>
</dbReference>
<dbReference type="InterPro" id="IPR006680">
    <property type="entry name" value="Amidohydro-rel"/>
</dbReference>
<dbReference type="InterPro" id="IPR011059">
    <property type="entry name" value="Metal-dep_hydrolase_composite"/>
</dbReference>
<dbReference type="InterPro" id="IPR032466">
    <property type="entry name" value="Metal_Hydrolase"/>
</dbReference>
<dbReference type="InterPro" id="IPR011612">
    <property type="entry name" value="Urease_alpha_N_dom"/>
</dbReference>
<dbReference type="InterPro" id="IPR050112">
    <property type="entry name" value="Urease_alpha_subunit"/>
</dbReference>
<dbReference type="InterPro" id="IPR017950">
    <property type="entry name" value="Urease_AS"/>
</dbReference>
<dbReference type="InterPro" id="IPR005848">
    <property type="entry name" value="Urease_asu"/>
</dbReference>
<dbReference type="InterPro" id="IPR017951">
    <property type="entry name" value="Urease_asu_c"/>
</dbReference>
<dbReference type="InterPro" id="IPR029754">
    <property type="entry name" value="Urease_Ni-bd"/>
</dbReference>
<dbReference type="NCBIfam" id="NF009686">
    <property type="entry name" value="PRK13207.1"/>
    <property type="match status" value="1"/>
</dbReference>
<dbReference type="NCBIfam" id="NF010591">
    <property type="entry name" value="PRK13985.1"/>
    <property type="match status" value="1"/>
</dbReference>
<dbReference type="NCBIfam" id="TIGR01792">
    <property type="entry name" value="urease_alph"/>
    <property type="match status" value="1"/>
</dbReference>
<dbReference type="PANTHER" id="PTHR43440">
    <property type="entry name" value="UREASE"/>
    <property type="match status" value="1"/>
</dbReference>
<dbReference type="PANTHER" id="PTHR43440:SF1">
    <property type="entry name" value="UREASE"/>
    <property type="match status" value="1"/>
</dbReference>
<dbReference type="Pfam" id="PF01979">
    <property type="entry name" value="Amidohydro_1"/>
    <property type="match status" value="1"/>
</dbReference>
<dbReference type="Pfam" id="PF00449">
    <property type="entry name" value="Urease_alpha"/>
    <property type="match status" value="1"/>
</dbReference>
<dbReference type="PRINTS" id="PR01752">
    <property type="entry name" value="UREASE"/>
</dbReference>
<dbReference type="SUPFAM" id="SSF51338">
    <property type="entry name" value="Composite domain of metallo-dependent hydrolases"/>
    <property type="match status" value="2"/>
</dbReference>
<dbReference type="SUPFAM" id="SSF51556">
    <property type="entry name" value="Metallo-dependent hydrolases"/>
    <property type="match status" value="1"/>
</dbReference>
<dbReference type="PROSITE" id="PS01120">
    <property type="entry name" value="UREASE_1"/>
    <property type="match status" value="1"/>
</dbReference>
<dbReference type="PROSITE" id="PS00145">
    <property type="entry name" value="UREASE_2"/>
    <property type="match status" value="1"/>
</dbReference>
<dbReference type="PROSITE" id="PS51368">
    <property type="entry name" value="UREASE_3"/>
    <property type="match status" value="1"/>
</dbReference>
<reference key="1">
    <citation type="journal article" date="1991" name="J. Bacteriol.">
        <title>Shuttle cloning and nucleotide sequences of Helicobacter pylori genes responsible for urease activity.</title>
        <authorList>
            <person name="Labigne A."/>
            <person name="Cussac V."/>
            <person name="Courcoux P."/>
        </authorList>
    </citation>
    <scope>NUCLEOTIDE SEQUENCE [GENOMIC DNA]</scope>
    <source>
        <strain>85P</strain>
    </source>
</reference>
<reference key="2">
    <citation type="journal article" date="1990" name="Nucleic Acids Res.">
        <title>Nucleotide sequence of two genes from Helicobacter pylori encoding for urease subunits.</title>
        <authorList>
            <person name="Clayton C.L."/>
            <person name="Pallen M.J."/>
            <person name="Kleanthous H."/>
            <person name="Wren B.W."/>
            <person name="Tabaqchali S."/>
        </authorList>
    </citation>
    <scope>NUCLEOTIDE SEQUENCE [GENOMIC DNA]</scope>
    <source>
        <strain>CPM630</strain>
    </source>
</reference>
<reference key="3">
    <citation type="journal article" date="1997" name="Nature">
        <title>The complete genome sequence of the gastric pathogen Helicobacter pylori.</title>
        <authorList>
            <person name="Tomb J.-F."/>
            <person name="White O."/>
            <person name="Kerlavage A.R."/>
            <person name="Clayton R.A."/>
            <person name="Sutton G.G."/>
            <person name="Fleischmann R.D."/>
            <person name="Ketchum K.A."/>
            <person name="Klenk H.-P."/>
            <person name="Gill S.R."/>
            <person name="Dougherty B.A."/>
            <person name="Nelson K.E."/>
            <person name="Quackenbush J."/>
            <person name="Zhou L."/>
            <person name="Kirkness E.F."/>
            <person name="Peterson S.N."/>
            <person name="Loftus B.J."/>
            <person name="Richardson D.L."/>
            <person name="Dodson R.J."/>
            <person name="Khalak H.G."/>
            <person name="Glodek A."/>
            <person name="McKenney K."/>
            <person name="FitzGerald L.M."/>
            <person name="Lee N."/>
            <person name="Adams M.D."/>
            <person name="Hickey E.K."/>
            <person name="Berg D.E."/>
            <person name="Gocayne J.D."/>
            <person name="Utterback T.R."/>
            <person name="Peterson J.D."/>
            <person name="Kelley J.M."/>
            <person name="Cotton M.D."/>
            <person name="Weidman J.F."/>
            <person name="Fujii C."/>
            <person name="Bowman C."/>
            <person name="Watthey L."/>
            <person name="Wallin E."/>
            <person name="Hayes W.S."/>
            <person name="Borodovsky M."/>
            <person name="Karp P.D."/>
            <person name="Smith H.O."/>
            <person name="Fraser C.M."/>
            <person name="Venter J.C."/>
        </authorList>
    </citation>
    <scope>NUCLEOTIDE SEQUENCE [LARGE SCALE GENOMIC DNA]</scope>
    <source>
        <strain>ATCC 700392 / 26695</strain>
    </source>
</reference>
<reference key="4">
    <citation type="journal article" date="1991" name="Microb. Pathog.">
        <title>Characterization of the Helicobacter pylori urease and purification of its subunits.</title>
        <authorList>
            <person name="Evans D.J. Jr."/>
            <person name="Evans D.G."/>
            <person name="Kirkpatrick S.S."/>
            <person name="Graham D.Y."/>
        </authorList>
    </citation>
    <scope>PROTEIN SEQUENCE OF 1-30</scope>
    <scope>CATALYTIC ACTIVITY</scope>
    <scope>KINETIC PARAMETERS</scope>
</reference>
<reference key="5">
    <citation type="journal article" date="1990" name="J. Biol. Chem.">
        <title>Purification and characterization of urease from Helicobacter pylori.</title>
        <authorList>
            <person name="Dunn B.E."/>
            <person name="Campbell G.P."/>
            <person name="Perez-Perez G.I."/>
            <person name="Blaser M.J."/>
        </authorList>
    </citation>
    <scope>PROTEIN SEQUENCE OF 1-20</scope>
    <scope>CATALYTIC ACTIVITY</scope>
    <scope>KINETIC PARAMETERS</scope>
    <scope>INTERACTION WITH UREA</scope>
</reference>
<reference key="6">
    <citation type="journal article" date="1990" name="Infect. Immun.">
        <title>Purification and N-terminal analysis of urease from Helicobacter pylori.</title>
        <authorList>
            <person name="Hu L.-T."/>
            <person name="Mobley H.L.T."/>
        </authorList>
    </citation>
    <scope>PROTEIN SEQUENCE OF 1-15</scope>
</reference>
<reference key="7">
    <citation type="journal article" date="1992" name="Infect. Immun.">
        <title>Purification and characterization of the urease enzymes of Helicobacter species from humans and animals.</title>
        <authorList>
            <person name="Turbett G.R."/>
            <person name="Hoej P.B."/>
            <person name="Horne R."/>
            <person name="Mee B.J."/>
        </authorList>
    </citation>
    <scope>PROTEIN SEQUENCE OF 1-12</scope>
    <source>
        <strain>ATCC 43504 / NCTC 11637 / JCM 7653 / RPH 13487</strain>
    </source>
</reference>
<reference key="8">
    <citation type="journal article" date="1992" name="J. Bacteriol.">
        <title>Expression of Helicobacter pylori urease genes in Escherichia coli grown under nitrogen-limiting conditions.</title>
        <authorList>
            <person name="Cussac V."/>
            <person name="Ferrero R.L."/>
            <person name="Labigne A."/>
        </authorList>
    </citation>
    <scope>NUCLEOTIDE SEQUENCE [GENOMIC DNA] OF 565-569</scope>
    <scope>DISRUPTION PHENOTYPE</scope>
    <source>
        <strain>85P</strain>
    </source>
</reference>
<reference key="9">
    <citation type="journal article" date="1992" name="Infect. Immun.">
        <title>Purification of recombinant Helicobacter pylori urease apoenzyme encoded by ureA and ureB.</title>
        <authorList>
            <person name="Hu L.-T."/>
            <person name="Foxall P.A."/>
            <person name="Russell R."/>
            <person name="Mobley H.L.T."/>
        </authorList>
    </citation>
    <scope>CATALYTIC ACTIVITY</scope>
</reference>
<reference key="10">
    <citation type="journal article" date="1994" name="Infect. Immun.">
        <title>A urease-negative mutant of Helicobacter pylori constructed by allelic exchange mutagenesis lacks the ability to colonize the nude mouse stomach.</title>
        <authorList>
            <person name="Tsuda M."/>
            <person name="Karita M."/>
            <person name="Morshed M.G."/>
            <person name="Okita K."/>
            <person name="Nakazawa T."/>
        </authorList>
    </citation>
    <scope>FUNCTION</scope>
    <scope>ROLE IN VIRULENCE</scope>
</reference>
<reference key="11">
    <citation type="journal article" date="1996" name="Infect. Immun.">
        <title>Surface localization of Helicobacter pylori urease and a heat shock protein homolog requires bacterial autolysis.</title>
        <authorList>
            <person name="Phadnis S.H."/>
            <person name="Parlow M.H."/>
            <person name="Levy M."/>
            <person name="Ilver D."/>
            <person name="Caulkins C.M."/>
            <person name="Connors J.B."/>
            <person name="Dunn B.E."/>
        </authorList>
    </citation>
    <scope>SUBCELLULAR LOCATION</scope>
</reference>
<reference key="12">
    <citation type="journal article" date="2001" name="Infect. Immun.">
        <title>Nickel-responsive induction of urease expression in Helicobacter pylori is mediated at the transcriptional level.</title>
        <authorList>
            <person name="van Vliet A.H.M."/>
            <person name="Kuipers E.J."/>
            <person name="Waidner B."/>
            <person name="Davies B.J."/>
            <person name="de Vries N."/>
            <person name="Penn C.W."/>
            <person name="Vandenbroucke-Grauls C.M.J.E."/>
            <person name="Kist M."/>
            <person name="Bereswill S."/>
            <person name="Kusters J.G."/>
        </authorList>
    </citation>
    <scope>INDUCTION</scope>
</reference>
<reference key="13">
    <citation type="journal article" date="2005" name="Microbiology">
        <title>Differential regulation of urease activity in Helicobacter hepaticus and Helicobacter pylori.</title>
        <authorList>
            <person name="Belzer C."/>
            <person name="Stoof J."/>
            <person name="Beckwith C.S."/>
            <person name="Kuipers E.J."/>
            <person name="Kusters J.G."/>
            <person name="van Vliet A.H.M."/>
        </authorList>
    </citation>
    <scope>INDUCTION</scope>
</reference>
<reference key="14">
    <citation type="journal article" date="2001" name="Nat. Struct. Biol.">
        <title>Supramolecular assembly and acid resistance of Helicobacter pylori urease.</title>
        <authorList>
            <person name="Ha N.-C."/>
            <person name="Oh S.-T."/>
            <person name="Sung J.Y."/>
            <person name="Cha K.A."/>
            <person name="Lee M.H."/>
            <person name="Oh B.-H."/>
        </authorList>
    </citation>
    <scope>X-RAY CRYSTALLOGRAPHY (3.0 ANGSTROMS) IN COMPLEX WITH NICKEL IONS</scope>
    <scope>SUBUNIT STRUCTURE</scope>
    <scope>CARBOXYLATION AT LYS-219</scope>
</reference>
<organism>
    <name type="scientific">Helicobacter pylori (strain ATCC 700392 / 26695)</name>
    <name type="common">Campylobacter pylori</name>
    <dbReference type="NCBI Taxonomy" id="85962"/>
    <lineage>
        <taxon>Bacteria</taxon>
        <taxon>Pseudomonadati</taxon>
        <taxon>Campylobacterota</taxon>
        <taxon>Epsilonproteobacteria</taxon>
        <taxon>Campylobacterales</taxon>
        <taxon>Helicobacteraceae</taxon>
        <taxon>Helicobacter</taxon>
    </lineage>
</organism>
<comment type="function">
    <text evidence="9">Ammonia produced by ureolysis increases the gastric pH thereby providing an environment permissive for colonization of the stomach.</text>
</comment>
<comment type="catalytic activity">
    <reaction evidence="1 5 7 8">
        <text>urea + 2 H2O + H(+) = hydrogencarbonate + 2 NH4(+)</text>
        <dbReference type="Rhea" id="RHEA:20557"/>
        <dbReference type="ChEBI" id="CHEBI:15377"/>
        <dbReference type="ChEBI" id="CHEBI:15378"/>
        <dbReference type="ChEBI" id="CHEBI:16199"/>
        <dbReference type="ChEBI" id="CHEBI:17544"/>
        <dbReference type="ChEBI" id="CHEBI:28938"/>
        <dbReference type="EC" id="3.5.1.5"/>
    </reaction>
</comment>
<comment type="cofactor">
    <cofactor>
        <name>Ni cation</name>
        <dbReference type="ChEBI" id="CHEBI:25516"/>
    </cofactor>
    <text>Binds 2 nickel ions per subunit.</text>
</comment>
<comment type="biophysicochemical properties">
    <kinetics>
        <KM evidence="7 8">0.48 mM for urea</KM>
        <Vmax evidence="7 8">1.1 mmol/min/mg enzyme</Vmax>
    </kinetics>
    <phDependence>
        <text>Optimum pH is 8.0. Active from pH 4.0 to 10.0. In unbuffered solutions, the dodecameric complex is active at pH3.0.</text>
    </phDependence>
</comment>
<comment type="pathway">
    <text evidence="1">Nitrogen metabolism; urea degradation; CO(2) and NH(3) from urea (urease route): step 1/1.</text>
</comment>
<comment type="subunit">
    <text evidence="1 2">Heterohexamer of 3 UreA (alpha) and 3 UreB (beta) subunits. Four heterohexamers assemble to form a 16 nm dodecameric complex.</text>
</comment>
<comment type="interaction">
    <interactant intactId="EBI-7566591">
        <id>P69996</id>
    </interactant>
    <interactant intactId="EBI-7737170">
        <id>P14916</id>
        <label>ureA</label>
    </interactant>
    <organismsDiffer>false</organismsDiffer>
    <experiments>2</experiments>
</comment>
<comment type="subcellular location">
    <subcellularLocation>
        <location evidence="1 10">Cytoplasm</location>
    </subcellularLocation>
    <text>Also associates with the outer membrane upon autolysis of neighboring bacteria.</text>
</comment>
<comment type="induction">
    <text evidence="3 6">By nickel ions.</text>
</comment>
<comment type="PTM">
    <text evidence="1 2">Carboxylation allows a single lysine to coordinate two nickel ions.</text>
</comment>
<comment type="disruption phenotype">
    <text evidence="4">Cells do not express urease.</text>
</comment>
<comment type="miscellaneous">
    <text>The novel dodecameric structure of the enzyme may allow it to remain active at the cell surface at acidic gastric pH. Within this dodecameric structure the 12 active sites are clustered within the interior of the proteinaceous shell. This may allow a high local concentration of ammonia within the enzyme which may protect the nickel-chelating groups from protonation.</text>
</comment>
<comment type="similarity">
    <text evidence="1">Belongs to the metallo-dependent hydrolases superfamily. Urease alpha subunit family.</text>
</comment>
<comment type="caution">
    <text evidence="11">The orthologous protein is known as the alpha subunit (UreC) in most other bacteria.</text>
</comment>
<comment type="online information" name="Protein Spotlight">
    <link uri="https://www.proteinspotlight.org/back_issues/095"/>
    <text>Going unnoticed - Issue 95 of June 2008</text>
</comment>
<accession>P69996</accession>
<accession>P14917</accession>
<accession>Q9R3B3</accession>